<dbReference type="EC" id="2.4.1.259"/>
<dbReference type="EC" id="2.4.1.261"/>
<dbReference type="EMBL" id="CU329670">
    <property type="protein sequence ID" value="CAB75773.1"/>
    <property type="molecule type" value="Genomic_DNA"/>
</dbReference>
<dbReference type="PIR" id="T50116">
    <property type="entry name" value="T50116"/>
</dbReference>
<dbReference type="RefSeq" id="NP_594684.1">
    <property type="nucleotide sequence ID" value="NM_001020113.2"/>
</dbReference>
<dbReference type="BioGRID" id="278797">
    <property type="interactions" value="43"/>
</dbReference>
<dbReference type="FunCoup" id="Q9P7Q9">
    <property type="interactions" value="675"/>
</dbReference>
<dbReference type="IntAct" id="Q9P7Q9">
    <property type="interactions" value="2"/>
</dbReference>
<dbReference type="MINT" id="Q9P7Q9"/>
<dbReference type="STRING" id="284812.Q9P7Q9"/>
<dbReference type="CAZy" id="GT22">
    <property type="family name" value="Glycosyltransferase Family 22"/>
</dbReference>
<dbReference type="iPTMnet" id="Q9P7Q9"/>
<dbReference type="PaxDb" id="4896-SPAC1834.05.1"/>
<dbReference type="EnsemblFungi" id="SPAC1834.05.1">
    <property type="protein sequence ID" value="SPAC1834.05.1:pep"/>
    <property type="gene ID" value="SPAC1834.05"/>
</dbReference>
<dbReference type="GeneID" id="2542331"/>
<dbReference type="KEGG" id="spo:2542331"/>
<dbReference type="PomBase" id="SPAC1834.05">
    <property type="gene designation" value="alg9"/>
</dbReference>
<dbReference type="VEuPathDB" id="FungiDB:SPAC1834.05"/>
<dbReference type="eggNOG" id="KOG2515">
    <property type="taxonomic scope" value="Eukaryota"/>
</dbReference>
<dbReference type="HOGENOM" id="CLU_018152_0_0_1"/>
<dbReference type="InParanoid" id="Q9P7Q9"/>
<dbReference type="OMA" id="PRDMHAK"/>
<dbReference type="PhylomeDB" id="Q9P7Q9"/>
<dbReference type="Reactome" id="R-SPO-446193">
    <property type="pathway name" value="Biosynthesis of the N-glycan precursor (dolichol lipid-linked oligosaccharide, LLO) and transfer to a nascent protein"/>
</dbReference>
<dbReference type="UniPathway" id="UPA00378"/>
<dbReference type="PRO" id="PR:Q9P7Q9"/>
<dbReference type="Proteomes" id="UP000002485">
    <property type="component" value="Chromosome I"/>
</dbReference>
<dbReference type="GO" id="GO:0005783">
    <property type="term" value="C:endoplasmic reticulum"/>
    <property type="evidence" value="ECO:0007005"/>
    <property type="project" value="PomBase"/>
</dbReference>
<dbReference type="GO" id="GO:0005789">
    <property type="term" value="C:endoplasmic reticulum membrane"/>
    <property type="evidence" value="ECO:0000318"/>
    <property type="project" value="GO_Central"/>
</dbReference>
<dbReference type="GO" id="GO:0098553">
    <property type="term" value="C:lumenal side of endoplasmic reticulum membrane"/>
    <property type="evidence" value="ECO:0000304"/>
    <property type="project" value="PomBase"/>
</dbReference>
<dbReference type="GO" id="GO:0000026">
    <property type="term" value="F:alpha-1,2-mannosyltransferase activity"/>
    <property type="evidence" value="ECO:0000318"/>
    <property type="project" value="GO_Central"/>
</dbReference>
<dbReference type="GO" id="GO:0052926">
    <property type="term" value="F:dol-P-Man:Man(6)GlcNAc(2)-PP-Dol alpha-1,2-mannosyltransferase activity"/>
    <property type="evidence" value="ECO:0007669"/>
    <property type="project" value="UniProtKB-EC"/>
</dbReference>
<dbReference type="GO" id="GO:0052918">
    <property type="term" value="F:dol-P-Man:Man(8)GlcNAc(2)-PP-Dol alpha-1,2-mannosyltransferase activity"/>
    <property type="evidence" value="ECO:0007669"/>
    <property type="project" value="UniProtKB-EC"/>
</dbReference>
<dbReference type="GO" id="GO:0006488">
    <property type="term" value="P:dolichol-linked oligosaccharide biosynthetic process"/>
    <property type="evidence" value="ECO:0000266"/>
    <property type="project" value="PomBase"/>
</dbReference>
<dbReference type="GO" id="GO:0006487">
    <property type="term" value="P:protein N-linked glycosylation"/>
    <property type="evidence" value="ECO:0000318"/>
    <property type="project" value="GO_Central"/>
</dbReference>
<dbReference type="InterPro" id="IPR005599">
    <property type="entry name" value="GPI_mannosylTrfase"/>
</dbReference>
<dbReference type="PANTHER" id="PTHR22760:SF2">
    <property type="entry name" value="ALPHA-1,2-MANNOSYLTRANSFERASE ALG9"/>
    <property type="match status" value="1"/>
</dbReference>
<dbReference type="PANTHER" id="PTHR22760">
    <property type="entry name" value="GLYCOSYLTRANSFERASE"/>
    <property type="match status" value="1"/>
</dbReference>
<dbReference type="Pfam" id="PF03901">
    <property type="entry name" value="Glyco_transf_22"/>
    <property type="match status" value="1"/>
</dbReference>
<proteinExistence type="inferred from homology"/>
<evidence type="ECO:0000250" key="1"/>
<evidence type="ECO:0000255" key="2"/>
<evidence type="ECO:0000305" key="3"/>
<gene>
    <name type="primary">alg9</name>
    <name type="ORF">SPAC1834.05</name>
</gene>
<feature type="signal peptide" evidence="2">
    <location>
        <begin position="1"/>
        <end position="29"/>
    </location>
</feature>
<feature type="chain" id="PRO_0000012142" description="Alpha-1,2-mannosyltransferase alg9">
    <location>
        <begin position="30"/>
        <end position="577"/>
    </location>
</feature>
<feature type="topological domain" description="Extracellular" evidence="2">
    <location>
        <begin position="30"/>
        <end position="68"/>
    </location>
</feature>
<feature type="transmembrane region" description="Helical" evidence="2">
    <location>
        <begin position="69"/>
        <end position="89"/>
    </location>
</feature>
<feature type="topological domain" description="Cytoplasmic" evidence="2">
    <location>
        <begin position="90"/>
        <end position="95"/>
    </location>
</feature>
<feature type="transmembrane region" description="Helical" evidence="2">
    <location>
        <begin position="96"/>
        <end position="116"/>
    </location>
</feature>
<feature type="topological domain" description="Extracellular" evidence="2">
    <location>
        <begin position="117"/>
        <end position="136"/>
    </location>
</feature>
<feature type="transmembrane region" description="Helical" evidence="2">
    <location>
        <begin position="137"/>
        <end position="159"/>
    </location>
</feature>
<feature type="topological domain" description="Cytoplasmic" evidence="2">
    <location>
        <begin position="160"/>
        <end position="176"/>
    </location>
</feature>
<feature type="transmembrane region" description="Helical" evidence="2">
    <location>
        <begin position="177"/>
        <end position="197"/>
    </location>
</feature>
<feature type="topological domain" description="Extracellular" evidence="2">
    <location>
        <begin position="198"/>
        <end position="217"/>
    </location>
</feature>
<feature type="transmembrane region" description="Helical" evidence="2">
    <location>
        <begin position="218"/>
        <end position="238"/>
    </location>
</feature>
<feature type="topological domain" description="Cytoplasmic" evidence="2">
    <location>
        <begin position="239"/>
        <end position="280"/>
    </location>
</feature>
<feature type="transmembrane region" description="Helical" evidence="2">
    <location>
        <begin position="281"/>
        <end position="301"/>
    </location>
</feature>
<feature type="topological domain" description="Extracellular" evidence="2">
    <location>
        <begin position="302"/>
        <end position="305"/>
    </location>
</feature>
<feature type="transmembrane region" description="Helical" evidence="2">
    <location>
        <begin position="306"/>
        <end position="326"/>
    </location>
</feature>
<feature type="topological domain" description="Cytoplasmic" evidence="2">
    <location>
        <begin position="327"/>
        <end position="333"/>
    </location>
</feature>
<feature type="transmembrane region" description="Helical" evidence="2">
    <location>
        <begin position="334"/>
        <end position="354"/>
    </location>
</feature>
<feature type="topological domain" description="Extracellular" evidence="2">
    <location>
        <begin position="355"/>
        <end position="375"/>
    </location>
</feature>
<feature type="transmembrane region" description="Helical" evidence="2">
    <location>
        <begin position="376"/>
        <end position="396"/>
    </location>
</feature>
<feature type="topological domain" description="Cytoplasmic" evidence="2">
    <location>
        <begin position="397"/>
        <end position="577"/>
    </location>
</feature>
<comment type="function">
    <text evidence="1">Catalyzes the transfer of mannose from Dol-P-Man to lipid-linked oligosaccharides.</text>
</comment>
<comment type="catalytic activity">
    <reaction>
        <text>an alpha-D-Man-(1-&gt;2)-alpha-D-Man-(1-&gt;2)-alpha-D-Man-(1-&gt;3)-[alpha-D-Man-(1-&gt;3)-alpha-D-Man-(1-&gt;6)]-beta-D-Man-(1-&gt;4)-beta-D-GlcNAc-(1-&gt;4)-alpha-D-GlcNAc-diphospho-di-trans,poly-cis-dolichol + a di-trans,poly-cis-dolichyl beta-D-mannosyl phosphate = an alpha-D-Man-(1-&gt;2)-alpha-D-Man-(1-&gt;2)-alpha-D-Man-(1-&gt;3)-[alpha-D-Man-(1-&gt;2)-alpha-D-Man-(1-&gt;3)-alpha-D-Man-(1-&gt;6)]-beta-D-Man-(1-&gt;4)-beta-D-GlcNAc-(1-&gt;4)-alpha-D-GlcNAc-diphospho-di-trans,poly-cis-dolichol + a di-trans,poly-cis-dolichyl phosphate + H(+)</text>
        <dbReference type="Rhea" id="RHEA:29531"/>
        <dbReference type="Rhea" id="RHEA-COMP:19498"/>
        <dbReference type="Rhea" id="RHEA-COMP:19501"/>
        <dbReference type="Rhea" id="RHEA-COMP:19517"/>
        <dbReference type="Rhea" id="RHEA-COMP:19518"/>
        <dbReference type="ChEBI" id="CHEBI:15378"/>
        <dbReference type="ChEBI" id="CHEBI:57683"/>
        <dbReference type="ChEBI" id="CHEBI:58211"/>
        <dbReference type="ChEBI" id="CHEBI:132516"/>
        <dbReference type="ChEBI" id="CHEBI:132517"/>
        <dbReference type="EC" id="2.4.1.259"/>
    </reaction>
</comment>
<comment type="catalytic activity">
    <reaction>
        <text>an alpha-D-Man-(1-&gt;2)-alpha-D-Man-(1-&gt;2)-alpha-D-Man-(1-&gt;3)-[alpha-D-Man-(1-&gt;2)-alpha-D-Man-(1-&gt;3)-[alpha-D-Man-(1-&gt;6)]-alpha-D-Man-(1-&gt;6)]-beta-D-Man-(1-&gt;4)-beta-D-GlcNAc-(1-&gt;4)-alpha-D-GlcNAc-diphospho-di-trans,poly-cis-dolichol + a di-trans,poly-cis-dolichyl beta-D-mannosyl phosphate = an alpha-D-Man-(1-&gt;2)-alpha-D-Man-(1-&gt;2)-alpha-D-Man-(1-&gt;3)-[alpha-D-Man-(1-&gt;2)-alpha-D-Man-(1-&gt;3)-[alpha-D-Man-(1-&gt;2)-alpha-D-Man-(1-&gt;6)]-alpha-D-Man-(1-&gt;6)]-beta-D-Man-(1-&gt;4)-beta-D-GlcNAc-(1-&gt;4)-alpha-D-GlcNAc-diphospho-di-trans,poly-cis-dolichol + a di-trans,poly-cis-dolichyl phosphate + H(+)</text>
        <dbReference type="Rhea" id="RHEA:29539"/>
        <dbReference type="Rhea" id="RHEA-COMP:19498"/>
        <dbReference type="Rhea" id="RHEA-COMP:19501"/>
        <dbReference type="Rhea" id="RHEA-COMP:19519"/>
        <dbReference type="Rhea" id="RHEA-COMP:19520"/>
        <dbReference type="ChEBI" id="CHEBI:15378"/>
        <dbReference type="ChEBI" id="CHEBI:57683"/>
        <dbReference type="ChEBI" id="CHEBI:58211"/>
        <dbReference type="ChEBI" id="CHEBI:132519"/>
        <dbReference type="ChEBI" id="CHEBI:132520"/>
        <dbReference type="EC" id="2.4.1.261"/>
    </reaction>
</comment>
<comment type="pathway">
    <text>Protein modification; protein glycosylation.</text>
</comment>
<comment type="subcellular location">
    <subcellularLocation>
        <location evidence="1">Endoplasmic reticulum membrane</location>
        <topology evidence="1">Multi-pass membrane protein</topology>
    </subcellularLocation>
</comment>
<comment type="similarity">
    <text evidence="3">Belongs to the glycosyltransferase 22 family.</text>
</comment>
<accession>Q9P7Q9</accession>
<name>ALG9_SCHPO</name>
<reference key="1">
    <citation type="journal article" date="2002" name="Nature">
        <title>The genome sequence of Schizosaccharomyces pombe.</title>
        <authorList>
            <person name="Wood V."/>
            <person name="Gwilliam R."/>
            <person name="Rajandream M.A."/>
            <person name="Lyne M.H."/>
            <person name="Lyne R."/>
            <person name="Stewart A."/>
            <person name="Sgouros J.G."/>
            <person name="Peat N."/>
            <person name="Hayles J."/>
            <person name="Baker S.G."/>
            <person name="Basham D."/>
            <person name="Bowman S."/>
            <person name="Brooks K."/>
            <person name="Brown D."/>
            <person name="Brown S."/>
            <person name="Chillingworth T."/>
            <person name="Churcher C.M."/>
            <person name="Collins M."/>
            <person name="Connor R."/>
            <person name="Cronin A."/>
            <person name="Davis P."/>
            <person name="Feltwell T."/>
            <person name="Fraser A."/>
            <person name="Gentles S."/>
            <person name="Goble A."/>
            <person name="Hamlin N."/>
            <person name="Harris D.E."/>
            <person name="Hidalgo J."/>
            <person name="Hodgson G."/>
            <person name="Holroyd S."/>
            <person name="Hornsby T."/>
            <person name="Howarth S."/>
            <person name="Huckle E.J."/>
            <person name="Hunt S."/>
            <person name="Jagels K."/>
            <person name="James K.D."/>
            <person name="Jones L."/>
            <person name="Jones M."/>
            <person name="Leather S."/>
            <person name="McDonald S."/>
            <person name="McLean J."/>
            <person name="Mooney P."/>
            <person name="Moule S."/>
            <person name="Mungall K.L."/>
            <person name="Murphy L.D."/>
            <person name="Niblett D."/>
            <person name="Odell C."/>
            <person name="Oliver K."/>
            <person name="O'Neil S."/>
            <person name="Pearson D."/>
            <person name="Quail M.A."/>
            <person name="Rabbinowitsch E."/>
            <person name="Rutherford K.M."/>
            <person name="Rutter S."/>
            <person name="Saunders D."/>
            <person name="Seeger K."/>
            <person name="Sharp S."/>
            <person name="Skelton J."/>
            <person name="Simmonds M.N."/>
            <person name="Squares R."/>
            <person name="Squares S."/>
            <person name="Stevens K."/>
            <person name="Taylor K."/>
            <person name="Taylor R.G."/>
            <person name="Tivey A."/>
            <person name="Walsh S.V."/>
            <person name="Warren T."/>
            <person name="Whitehead S."/>
            <person name="Woodward J.R."/>
            <person name="Volckaert G."/>
            <person name="Aert R."/>
            <person name="Robben J."/>
            <person name="Grymonprez B."/>
            <person name="Weltjens I."/>
            <person name="Vanstreels E."/>
            <person name="Rieger M."/>
            <person name="Schaefer M."/>
            <person name="Mueller-Auer S."/>
            <person name="Gabel C."/>
            <person name="Fuchs M."/>
            <person name="Duesterhoeft A."/>
            <person name="Fritzc C."/>
            <person name="Holzer E."/>
            <person name="Moestl D."/>
            <person name="Hilbert H."/>
            <person name="Borzym K."/>
            <person name="Langer I."/>
            <person name="Beck A."/>
            <person name="Lehrach H."/>
            <person name="Reinhardt R."/>
            <person name="Pohl T.M."/>
            <person name="Eger P."/>
            <person name="Zimmermann W."/>
            <person name="Wedler H."/>
            <person name="Wambutt R."/>
            <person name="Purnelle B."/>
            <person name="Goffeau A."/>
            <person name="Cadieu E."/>
            <person name="Dreano S."/>
            <person name="Gloux S."/>
            <person name="Lelaure V."/>
            <person name="Mottier S."/>
            <person name="Galibert F."/>
            <person name="Aves S.J."/>
            <person name="Xiang Z."/>
            <person name="Hunt C."/>
            <person name="Moore K."/>
            <person name="Hurst S.M."/>
            <person name="Lucas M."/>
            <person name="Rochet M."/>
            <person name="Gaillardin C."/>
            <person name="Tallada V.A."/>
            <person name="Garzon A."/>
            <person name="Thode G."/>
            <person name="Daga R.R."/>
            <person name="Cruzado L."/>
            <person name="Jimenez J."/>
            <person name="Sanchez M."/>
            <person name="del Rey F."/>
            <person name="Benito J."/>
            <person name="Dominguez A."/>
            <person name="Revuelta J.L."/>
            <person name="Moreno S."/>
            <person name="Armstrong J."/>
            <person name="Forsburg S.L."/>
            <person name="Cerutti L."/>
            <person name="Lowe T."/>
            <person name="McCombie W.R."/>
            <person name="Paulsen I."/>
            <person name="Potashkin J."/>
            <person name="Shpakovski G.V."/>
            <person name="Ussery D."/>
            <person name="Barrell B.G."/>
            <person name="Nurse P."/>
        </authorList>
    </citation>
    <scope>NUCLEOTIDE SEQUENCE [LARGE SCALE GENOMIC DNA]</scope>
    <source>
        <strain>972 / ATCC 24843</strain>
    </source>
</reference>
<protein>
    <recommendedName>
        <fullName>Alpha-1,2-mannosyltransferase alg9</fullName>
        <ecNumber>2.4.1.259</ecNumber>
        <ecNumber>2.4.1.261</ecNumber>
    </recommendedName>
    <alternativeName>
        <fullName>Asparagine-linked glycosylation protein 9</fullName>
    </alternativeName>
    <alternativeName>
        <fullName>Dol-P-Man:Man(6)GlcNAc(2)-PP-Dol alpha-1,2-mannosyltransferase</fullName>
    </alternativeName>
    <alternativeName>
        <fullName>Dol-P-Man:Man(8)GlcNAc(2)-PP-Dol alpha-1,2-mannosyltransferase</fullName>
    </alternativeName>
</protein>
<organism>
    <name type="scientific">Schizosaccharomyces pombe (strain 972 / ATCC 24843)</name>
    <name type="common">Fission yeast</name>
    <dbReference type="NCBI Taxonomy" id="284812"/>
    <lineage>
        <taxon>Eukaryota</taxon>
        <taxon>Fungi</taxon>
        <taxon>Dikarya</taxon>
        <taxon>Ascomycota</taxon>
        <taxon>Taphrinomycotina</taxon>
        <taxon>Schizosaccharomycetes</taxon>
        <taxon>Schizosaccharomycetales</taxon>
        <taxon>Schizosaccharomycetaceae</taxon>
        <taxon>Schizosaccharomyces</taxon>
    </lineage>
</organism>
<sequence length="577" mass="66270">MPSKAPRKSLSVSFVWTFSILAVLRLTSASFRVIDDCDEVYNYWEPLHYLLYGYGLQTWEYSPEYAIRSWFYIALHAVPGFLARGLGLSRLHVFYFIRGVLACFSAFCETNLILAVARNFNRAVALHLTSVLFVNSGMWSASTSFLPSSFAMNMVTLALSAQLSPPSTKRTVKVVSFITIGAVIGWPFSAALSIPFILLELVDLKGRFRHLFCRWFKAIFVALLITGICITVDSLFYHRIQFVAWNIVKYNVLAKDGRGPDIYGTEPWWYYFANLSLQHNIVLWFAMACGPLVLLAAFTNWINLDSFLDLSSVISPFYIWLFIFIIQPHKEERFMYPIYPVLCLAAAIGLDMSLKLMIQILSSINETVRSKFPVRFVVLCVYAIIGCLSIARILAIQNYNAPMIIYPAISFLETDNNVTTNVCVGKEWYRYPSTFFLPDNSRLKFVKSEFDGILPGEFVESNSTWWNREGYYQIPEHMNEFNNEEPTRYTSLESCDFLIDLEFDHSKATVNEPIYSKSDGWIPVMVYPFIDTKQTPFMGRAFAVPFIEPKWGRYEILVKKPVKIDFSNLRRASKQQA</sequence>
<keyword id="KW-0256">Endoplasmic reticulum</keyword>
<keyword id="KW-0328">Glycosyltransferase</keyword>
<keyword id="KW-0472">Membrane</keyword>
<keyword id="KW-1185">Reference proteome</keyword>
<keyword id="KW-0732">Signal</keyword>
<keyword id="KW-0808">Transferase</keyword>
<keyword id="KW-0812">Transmembrane</keyword>
<keyword id="KW-1133">Transmembrane helix</keyword>